<sequence length="283" mass="31629">MTEFTTLLQQGNAWFFIPSAILLGALHGLEPGHSKTMMAAFIIAIKGTIKQAVMLGLAATISHTAVVWLIAFGGMVISKRFTAQSAEPWLQLISAVIIISTAFWMFWRTWRGERNWLENMHEHHHHDHEHHQDHDHDHDHDHDHEHHHHHEHGDNEEYQDAHARAHANDIKRRFDGREVTNWQILLFGLTGGLIPCPAAITVLLICIQLKALTLGATLVVSFSIGLALTLVTVGVGAAISVQQVAKRWSGFNTLAKRAPYFSSLLIGLVGVYMGVHGFMGIMR</sequence>
<protein>
    <recommendedName>
        <fullName>Nickel/cobalt efflux system RcnA</fullName>
    </recommendedName>
</protein>
<reference key="1">
    <citation type="journal article" date="2001" name="Nature">
        <title>Genome sequence of enterohaemorrhagic Escherichia coli O157:H7.</title>
        <authorList>
            <person name="Perna N.T."/>
            <person name="Plunkett G. III"/>
            <person name="Burland V."/>
            <person name="Mau B."/>
            <person name="Glasner J.D."/>
            <person name="Rose D.J."/>
            <person name="Mayhew G.F."/>
            <person name="Evans P.S."/>
            <person name="Gregor J."/>
            <person name="Kirkpatrick H.A."/>
            <person name="Posfai G."/>
            <person name="Hackett J."/>
            <person name="Klink S."/>
            <person name="Boutin A."/>
            <person name="Shao Y."/>
            <person name="Miller L."/>
            <person name="Grotbeck E.J."/>
            <person name="Davis N.W."/>
            <person name="Lim A."/>
            <person name="Dimalanta E.T."/>
            <person name="Potamousis K."/>
            <person name="Apodaca J."/>
            <person name="Anantharaman T.S."/>
            <person name="Lin J."/>
            <person name="Yen G."/>
            <person name="Schwartz D.C."/>
            <person name="Welch R.A."/>
            <person name="Blattner F.R."/>
        </authorList>
    </citation>
    <scope>NUCLEOTIDE SEQUENCE [LARGE SCALE GENOMIC DNA]</scope>
    <source>
        <strain>O157:H7 / EDL933 / ATCC 700927 / EHEC</strain>
    </source>
</reference>
<reference key="2">
    <citation type="journal article" date="2001" name="DNA Res.">
        <title>Complete genome sequence of enterohemorrhagic Escherichia coli O157:H7 and genomic comparison with a laboratory strain K-12.</title>
        <authorList>
            <person name="Hayashi T."/>
            <person name="Makino K."/>
            <person name="Ohnishi M."/>
            <person name="Kurokawa K."/>
            <person name="Ishii K."/>
            <person name="Yokoyama K."/>
            <person name="Han C.-G."/>
            <person name="Ohtsubo E."/>
            <person name="Nakayama K."/>
            <person name="Murata T."/>
            <person name="Tanaka M."/>
            <person name="Tobe T."/>
            <person name="Iida T."/>
            <person name="Takami H."/>
            <person name="Honda T."/>
            <person name="Sasakawa C."/>
            <person name="Ogasawara N."/>
            <person name="Yasunaga T."/>
            <person name="Kuhara S."/>
            <person name="Shiba T."/>
            <person name="Hattori M."/>
            <person name="Shinagawa H."/>
        </authorList>
    </citation>
    <scope>NUCLEOTIDE SEQUENCE [LARGE SCALE GENOMIC DNA]</scope>
    <source>
        <strain>O157:H7 / Sakai / RIMD 0509952 / EHEC</strain>
    </source>
</reference>
<evidence type="ECO:0000250" key="1"/>
<evidence type="ECO:0000255" key="2"/>
<evidence type="ECO:0000256" key="3">
    <source>
        <dbReference type="SAM" id="MobiDB-lite"/>
    </source>
</evidence>
<evidence type="ECO:0000305" key="4"/>
<proteinExistence type="inferred from homology"/>
<dbReference type="EMBL" id="AE005174">
    <property type="protein sequence ID" value="AAG57167.1"/>
    <property type="molecule type" value="Genomic_DNA"/>
</dbReference>
<dbReference type="EMBL" id="BA000007">
    <property type="protein sequence ID" value="BAB36335.1"/>
    <property type="molecule type" value="Genomic_DNA"/>
</dbReference>
<dbReference type="PIR" id="C85838">
    <property type="entry name" value="C85838"/>
</dbReference>
<dbReference type="PIR" id="H90992">
    <property type="entry name" value="H90992"/>
</dbReference>
<dbReference type="RefSeq" id="NP_310939.1">
    <property type="nucleotide sequence ID" value="NC_002695.1"/>
</dbReference>
<dbReference type="RefSeq" id="WP_000134629.1">
    <property type="nucleotide sequence ID" value="NZ_SEKU01000011.1"/>
</dbReference>
<dbReference type="STRING" id="155864.Z3274"/>
<dbReference type="GeneID" id="916615"/>
<dbReference type="KEGG" id="ece:Z3274"/>
<dbReference type="KEGG" id="ecs:ECs_2912"/>
<dbReference type="PATRIC" id="fig|386585.9.peg.3043"/>
<dbReference type="eggNOG" id="COG2215">
    <property type="taxonomic scope" value="Bacteria"/>
</dbReference>
<dbReference type="HOGENOM" id="CLU_058605_2_0_6"/>
<dbReference type="Proteomes" id="UP000000558">
    <property type="component" value="Chromosome"/>
</dbReference>
<dbReference type="Proteomes" id="UP000002519">
    <property type="component" value="Chromosome"/>
</dbReference>
<dbReference type="GO" id="GO:0005886">
    <property type="term" value="C:plasma membrane"/>
    <property type="evidence" value="ECO:0007669"/>
    <property type="project" value="UniProtKB-SubCell"/>
</dbReference>
<dbReference type="GO" id="GO:0046583">
    <property type="term" value="F:monoatomic cation efflux transmembrane transporter activity"/>
    <property type="evidence" value="ECO:0007669"/>
    <property type="project" value="TreeGrafter"/>
</dbReference>
<dbReference type="GO" id="GO:0015099">
    <property type="term" value="F:nickel cation transmembrane transporter activity"/>
    <property type="evidence" value="ECO:0007669"/>
    <property type="project" value="InterPro"/>
</dbReference>
<dbReference type="GO" id="GO:0006824">
    <property type="term" value="P:cobalt ion transport"/>
    <property type="evidence" value="ECO:0007669"/>
    <property type="project" value="UniProtKB-KW"/>
</dbReference>
<dbReference type="GO" id="GO:0032025">
    <property type="term" value="P:response to cobalt ion"/>
    <property type="evidence" value="ECO:0007669"/>
    <property type="project" value="TreeGrafter"/>
</dbReference>
<dbReference type="GO" id="GO:0010045">
    <property type="term" value="P:response to nickel cation"/>
    <property type="evidence" value="ECO:0007669"/>
    <property type="project" value="TreeGrafter"/>
</dbReference>
<dbReference type="InterPro" id="IPR011541">
    <property type="entry name" value="Ni/Co_transpt_high_affinity"/>
</dbReference>
<dbReference type="InterPro" id="IPR051224">
    <property type="entry name" value="NiCoT_RcnA"/>
</dbReference>
<dbReference type="NCBIfam" id="NF007454">
    <property type="entry name" value="PRK10019.1"/>
    <property type="match status" value="1"/>
</dbReference>
<dbReference type="PANTHER" id="PTHR40659">
    <property type="entry name" value="NICKEL/COBALT EFFLUX SYSTEM RCNA"/>
    <property type="match status" value="1"/>
</dbReference>
<dbReference type="PANTHER" id="PTHR40659:SF1">
    <property type="entry name" value="NICKEL_COBALT EFFLUX SYSTEM RCNA"/>
    <property type="match status" value="1"/>
</dbReference>
<dbReference type="Pfam" id="PF03824">
    <property type="entry name" value="NicO"/>
    <property type="match status" value="1"/>
</dbReference>
<keyword id="KW-0997">Cell inner membrane</keyword>
<keyword id="KW-1003">Cell membrane</keyword>
<keyword id="KW-0170">Cobalt</keyword>
<keyword id="KW-0171">Cobalt transport</keyword>
<keyword id="KW-0406">Ion transport</keyword>
<keyword id="KW-0472">Membrane</keyword>
<keyword id="KW-0533">Nickel</keyword>
<keyword id="KW-0921">Nickel transport</keyword>
<keyword id="KW-1185">Reference proteome</keyword>
<keyword id="KW-0812">Transmembrane</keyword>
<keyword id="KW-1133">Transmembrane helix</keyword>
<keyword id="KW-0813">Transport</keyword>
<feature type="chain" id="PRO_0000194011" description="Nickel/cobalt efflux system RcnA">
    <location>
        <begin position="1"/>
        <end position="283"/>
    </location>
</feature>
<feature type="topological domain" description="Periplasmic" evidence="2">
    <location>
        <begin position="1"/>
        <end position="12"/>
    </location>
</feature>
<feature type="transmembrane region" description="Helical" evidence="2">
    <location>
        <begin position="13"/>
        <end position="33"/>
    </location>
</feature>
<feature type="topological domain" description="Cytoplasmic" evidence="2">
    <location>
        <begin position="34"/>
        <end position="56"/>
    </location>
</feature>
<feature type="transmembrane region" description="Helical" evidence="2">
    <location>
        <begin position="57"/>
        <end position="77"/>
    </location>
</feature>
<feature type="topological domain" description="Periplasmic" evidence="2">
    <location>
        <begin position="78"/>
        <end position="86"/>
    </location>
</feature>
<feature type="transmembrane region" description="Helical" evidence="2">
    <location>
        <begin position="87"/>
        <end position="107"/>
    </location>
</feature>
<feature type="topological domain" description="Cytoplasmic" evidence="2">
    <location>
        <begin position="108"/>
        <end position="184"/>
    </location>
</feature>
<feature type="transmembrane region" description="Helical" evidence="2">
    <location>
        <begin position="185"/>
        <end position="205"/>
    </location>
</feature>
<feature type="topological domain" description="Periplasmic" evidence="2">
    <location>
        <begin position="206"/>
        <end position="218"/>
    </location>
</feature>
<feature type="transmembrane region" description="Helical" evidence="2">
    <location>
        <begin position="219"/>
        <end position="239"/>
    </location>
</feature>
<feature type="topological domain" description="Cytoplasmic" evidence="2">
    <location>
        <begin position="240"/>
        <end position="260"/>
    </location>
</feature>
<feature type="transmembrane region" description="Helical" evidence="2">
    <location>
        <begin position="261"/>
        <end position="281"/>
    </location>
</feature>
<feature type="topological domain" description="Periplasmic" evidence="2">
    <location>
        <begin position="282"/>
        <end position="283"/>
    </location>
</feature>
<feature type="region of interest" description="Disordered" evidence="3">
    <location>
        <begin position="127"/>
        <end position="162"/>
    </location>
</feature>
<feature type="compositionally biased region" description="Basic and acidic residues" evidence="3">
    <location>
        <begin position="129"/>
        <end position="144"/>
    </location>
</feature>
<feature type="compositionally biased region" description="Basic and acidic residues" evidence="3">
    <location>
        <begin position="151"/>
        <end position="162"/>
    </location>
</feature>
<feature type="sequence variant" description="In strain: Sakai.">
    <location>
        <begin position="138"/>
        <end position="141"/>
    </location>
</feature>
<gene>
    <name type="primary">rcnA</name>
    <name type="ordered locus">Z3274</name>
    <name type="ordered locus">ECs2912</name>
</gene>
<name>RCNA_ECO57</name>
<organism>
    <name type="scientific">Escherichia coli O157:H7</name>
    <dbReference type="NCBI Taxonomy" id="83334"/>
    <lineage>
        <taxon>Bacteria</taxon>
        <taxon>Pseudomonadati</taxon>
        <taxon>Pseudomonadota</taxon>
        <taxon>Gammaproteobacteria</taxon>
        <taxon>Enterobacterales</taxon>
        <taxon>Enterobacteriaceae</taxon>
        <taxon>Escherichia</taxon>
    </lineage>
</organism>
<accession>Q8X3U5</accession>
<accession>Q8X369</accession>
<comment type="function">
    <text evidence="1">Efflux system for nickel and cobalt.</text>
</comment>
<comment type="subcellular location">
    <subcellularLocation>
        <location evidence="1">Cell inner membrane</location>
        <topology evidence="1">Multi-pass membrane protein</topology>
    </subcellularLocation>
</comment>
<comment type="induction">
    <text evidence="1">By nickel and cobalt. Transcriptionally repressed by RcnR (By similarity).</text>
</comment>
<comment type="similarity">
    <text evidence="4">Belongs to the NiCoT transporter (TC 2.A.52) family. RcnA subfamily.</text>
</comment>